<comment type="function">
    <text evidence="1">Catalyzes the reversible phosphatidyl group transfer from one phosphatidylglycerol molecule to another to form cardiolipin (CL) (diphosphatidylglycerol) and glycerol.</text>
</comment>
<comment type="catalytic activity">
    <reaction evidence="1">
        <text>2 a 1,2-diacyl-sn-glycero-3-phospho-(1'-sn-glycerol) = a cardiolipin + glycerol</text>
        <dbReference type="Rhea" id="RHEA:31451"/>
        <dbReference type="ChEBI" id="CHEBI:17754"/>
        <dbReference type="ChEBI" id="CHEBI:62237"/>
        <dbReference type="ChEBI" id="CHEBI:64716"/>
    </reaction>
</comment>
<comment type="subcellular location">
    <subcellularLocation>
        <location evidence="1">Cell inner membrane</location>
        <topology evidence="1">Multi-pass membrane protein</topology>
    </subcellularLocation>
</comment>
<comment type="similarity">
    <text evidence="1">Belongs to the phospholipase D family. Cardiolipin synthase subfamily. ClsA sub-subfamily.</text>
</comment>
<comment type="sequence caution" evidence="2">
    <conflict type="erroneous initiation">
        <sequence resource="EMBL-CDS" id="AAM85599"/>
    </conflict>
</comment>
<comment type="sequence caution" evidence="2">
    <conflict type="erroneous initiation">
        <sequence resource="EMBL-CDS" id="AAS62203"/>
    </conflict>
</comment>
<keyword id="KW-0997">Cell inner membrane</keyword>
<keyword id="KW-1003">Cell membrane</keyword>
<keyword id="KW-0444">Lipid biosynthesis</keyword>
<keyword id="KW-0443">Lipid metabolism</keyword>
<keyword id="KW-0472">Membrane</keyword>
<keyword id="KW-0594">Phospholipid biosynthesis</keyword>
<keyword id="KW-1208">Phospholipid metabolism</keyword>
<keyword id="KW-1185">Reference proteome</keyword>
<keyword id="KW-0677">Repeat</keyword>
<keyword id="KW-0808">Transferase</keyword>
<keyword id="KW-0812">Transmembrane</keyword>
<keyword id="KW-1133">Transmembrane helix</keyword>
<reference key="1">
    <citation type="journal article" date="2001" name="Nature">
        <title>Genome sequence of Yersinia pestis, the causative agent of plague.</title>
        <authorList>
            <person name="Parkhill J."/>
            <person name="Wren B.W."/>
            <person name="Thomson N.R."/>
            <person name="Titball R.W."/>
            <person name="Holden M.T.G."/>
            <person name="Prentice M.B."/>
            <person name="Sebaihia M."/>
            <person name="James K.D."/>
            <person name="Churcher C.M."/>
            <person name="Mungall K.L."/>
            <person name="Baker S."/>
            <person name="Basham D."/>
            <person name="Bentley S.D."/>
            <person name="Brooks K."/>
            <person name="Cerdeno-Tarraga A.-M."/>
            <person name="Chillingworth T."/>
            <person name="Cronin A."/>
            <person name="Davies R.M."/>
            <person name="Davis P."/>
            <person name="Dougan G."/>
            <person name="Feltwell T."/>
            <person name="Hamlin N."/>
            <person name="Holroyd S."/>
            <person name="Jagels K."/>
            <person name="Karlyshev A.V."/>
            <person name="Leather S."/>
            <person name="Moule S."/>
            <person name="Oyston P.C.F."/>
            <person name="Quail M.A."/>
            <person name="Rutherford K.M."/>
            <person name="Simmonds M."/>
            <person name="Skelton J."/>
            <person name="Stevens K."/>
            <person name="Whitehead S."/>
            <person name="Barrell B.G."/>
        </authorList>
    </citation>
    <scope>NUCLEOTIDE SEQUENCE [LARGE SCALE GENOMIC DNA]</scope>
    <source>
        <strain>CO-92 / Biovar Orientalis</strain>
    </source>
</reference>
<reference key="2">
    <citation type="journal article" date="2002" name="J. Bacteriol.">
        <title>Genome sequence of Yersinia pestis KIM.</title>
        <authorList>
            <person name="Deng W."/>
            <person name="Burland V."/>
            <person name="Plunkett G. III"/>
            <person name="Boutin A."/>
            <person name="Mayhew G.F."/>
            <person name="Liss P."/>
            <person name="Perna N.T."/>
            <person name="Rose D.J."/>
            <person name="Mau B."/>
            <person name="Zhou S."/>
            <person name="Schwartz D.C."/>
            <person name="Fetherston J.D."/>
            <person name="Lindler L.E."/>
            <person name="Brubaker R.R."/>
            <person name="Plano G.V."/>
            <person name="Straley S.C."/>
            <person name="McDonough K.A."/>
            <person name="Nilles M.L."/>
            <person name="Matson J.S."/>
            <person name="Blattner F.R."/>
            <person name="Perry R.D."/>
        </authorList>
    </citation>
    <scope>NUCLEOTIDE SEQUENCE [LARGE SCALE GENOMIC DNA]</scope>
    <source>
        <strain>KIM10+ / Biovar Mediaevalis</strain>
    </source>
</reference>
<reference key="3">
    <citation type="journal article" date="2004" name="DNA Res.">
        <title>Complete genome sequence of Yersinia pestis strain 91001, an isolate avirulent to humans.</title>
        <authorList>
            <person name="Song Y."/>
            <person name="Tong Z."/>
            <person name="Wang J."/>
            <person name="Wang L."/>
            <person name="Guo Z."/>
            <person name="Han Y."/>
            <person name="Zhang J."/>
            <person name="Pei D."/>
            <person name="Zhou D."/>
            <person name="Qin H."/>
            <person name="Pang X."/>
            <person name="Han Y."/>
            <person name="Zhai J."/>
            <person name="Li M."/>
            <person name="Cui B."/>
            <person name="Qi Z."/>
            <person name="Jin L."/>
            <person name="Dai R."/>
            <person name="Chen F."/>
            <person name="Li S."/>
            <person name="Ye C."/>
            <person name="Du Z."/>
            <person name="Lin W."/>
            <person name="Wang J."/>
            <person name="Yu J."/>
            <person name="Yang H."/>
            <person name="Wang J."/>
            <person name="Huang P."/>
            <person name="Yang R."/>
        </authorList>
    </citation>
    <scope>NUCLEOTIDE SEQUENCE [LARGE SCALE GENOMIC DNA]</scope>
    <source>
        <strain>91001 / Biovar Mediaevalis</strain>
    </source>
</reference>
<name>CLSA_YERPE</name>
<protein>
    <recommendedName>
        <fullName evidence="1">Cardiolipin synthase A</fullName>
        <shortName evidence="1">CL synthase</shortName>
        <ecNumber evidence="1">2.7.8.-</ecNumber>
    </recommendedName>
</protein>
<evidence type="ECO:0000255" key="1">
    <source>
        <dbReference type="HAMAP-Rule" id="MF_00190"/>
    </source>
</evidence>
<evidence type="ECO:0000305" key="2"/>
<accession>Q8ZEI2</accession>
<accession>Q0WEX7</accession>
<accession>Q8D0K0</accession>
<feature type="chain" id="PRO_0000201280" description="Cardiolipin synthase A">
    <location>
        <begin position="1"/>
        <end position="486"/>
    </location>
</feature>
<feature type="transmembrane region" description="Helical" evidence="1">
    <location>
        <begin position="3"/>
        <end position="23"/>
    </location>
</feature>
<feature type="transmembrane region" description="Helical" evidence="1">
    <location>
        <begin position="38"/>
        <end position="58"/>
    </location>
</feature>
<feature type="domain" description="PLD phosphodiesterase 1" evidence="1">
    <location>
        <begin position="219"/>
        <end position="246"/>
    </location>
</feature>
<feature type="domain" description="PLD phosphodiesterase 2" evidence="1">
    <location>
        <begin position="399"/>
        <end position="426"/>
    </location>
</feature>
<feature type="active site" evidence="1">
    <location>
        <position position="224"/>
    </location>
</feature>
<feature type="active site" evidence="1">
    <location>
        <position position="226"/>
    </location>
</feature>
<feature type="active site" evidence="1">
    <location>
        <position position="231"/>
    </location>
</feature>
<feature type="active site" evidence="1">
    <location>
        <position position="404"/>
    </location>
</feature>
<feature type="active site" evidence="1">
    <location>
        <position position="406"/>
    </location>
</feature>
<feature type="active site" evidence="1">
    <location>
        <position position="411"/>
    </location>
</feature>
<gene>
    <name evidence="1" type="primary">clsA</name>
    <name type="synonym">cls</name>
    <name type="ordered locus">YPO2188</name>
    <name type="ordered locus">y2033</name>
    <name type="ordered locus">YP_1986</name>
</gene>
<organism>
    <name type="scientific">Yersinia pestis</name>
    <dbReference type="NCBI Taxonomy" id="632"/>
    <lineage>
        <taxon>Bacteria</taxon>
        <taxon>Pseudomonadati</taxon>
        <taxon>Pseudomonadota</taxon>
        <taxon>Gammaproteobacteria</taxon>
        <taxon>Enterobacterales</taxon>
        <taxon>Yersiniaceae</taxon>
        <taxon>Yersinia</taxon>
    </lineage>
</organism>
<dbReference type="EC" id="2.7.8.-" evidence="1"/>
<dbReference type="EMBL" id="AL590842">
    <property type="protein sequence ID" value="CAL20818.1"/>
    <property type="molecule type" value="Genomic_DNA"/>
</dbReference>
<dbReference type="EMBL" id="AE009952">
    <property type="protein sequence ID" value="AAM85599.1"/>
    <property type="status" value="ALT_INIT"/>
    <property type="molecule type" value="Genomic_DNA"/>
</dbReference>
<dbReference type="EMBL" id="AE017042">
    <property type="protein sequence ID" value="AAS62203.1"/>
    <property type="status" value="ALT_INIT"/>
    <property type="molecule type" value="Genomic_DNA"/>
</dbReference>
<dbReference type="PIR" id="AG0266">
    <property type="entry name" value="AG0266"/>
</dbReference>
<dbReference type="RefSeq" id="WP_002210648.1">
    <property type="nucleotide sequence ID" value="NZ_WUCM01000093.1"/>
</dbReference>
<dbReference type="RefSeq" id="YP_002347161.1">
    <property type="nucleotide sequence ID" value="NC_003143.1"/>
</dbReference>
<dbReference type="SMR" id="Q8ZEI2"/>
<dbReference type="STRING" id="214092.YPO2188"/>
<dbReference type="PaxDb" id="214092-YPO2188"/>
<dbReference type="DNASU" id="1146980"/>
<dbReference type="EnsemblBacteria" id="AAS62203">
    <property type="protein sequence ID" value="AAS62203"/>
    <property type="gene ID" value="YP_1986"/>
</dbReference>
<dbReference type="GeneID" id="57976479"/>
<dbReference type="KEGG" id="ype:YPO2188"/>
<dbReference type="KEGG" id="ypk:y2033"/>
<dbReference type="KEGG" id="ypm:YP_1986"/>
<dbReference type="PATRIC" id="fig|214092.21.peg.2580"/>
<dbReference type="eggNOG" id="COG1502">
    <property type="taxonomic scope" value="Bacteria"/>
</dbReference>
<dbReference type="HOGENOM" id="CLU_038053_1_0_6"/>
<dbReference type="OMA" id="WLNFEVT"/>
<dbReference type="OrthoDB" id="9814092at2"/>
<dbReference type="Proteomes" id="UP000000815">
    <property type="component" value="Chromosome"/>
</dbReference>
<dbReference type="Proteomes" id="UP000001019">
    <property type="component" value="Chromosome"/>
</dbReference>
<dbReference type="Proteomes" id="UP000002490">
    <property type="component" value="Chromosome"/>
</dbReference>
<dbReference type="GO" id="GO:0016020">
    <property type="term" value="C:membrane"/>
    <property type="evidence" value="ECO:0000318"/>
    <property type="project" value="GO_Central"/>
</dbReference>
<dbReference type="GO" id="GO:0005886">
    <property type="term" value="C:plasma membrane"/>
    <property type="evidence" value="ECO:0007669"/>
    <property type="project" value="UniProtKB-SubCell"/>
</dbReference>
<dbReference type="GO" id="GO:0008808">
    <property type="term" value="F:cardiolipin synthase activity"/>
    <property type="evidence" value="ECO:0000318"/>
    <property type="project" value="GO_Central"/>
</dbReference>
<dbReference type="GO" id="GO:0032049">
    <property type="term" value="P:cardiolipin biosynthetic process"/>
    <property type="evidence" value="ECO:0000318"/>
    <property type="project" value="GO_Central"/>
</dbReference>
<dbReference type="CDD" id="cd09152">
    <property type="entry name" value="PLDc_EcCLS_like_1"/>
    <property type="match status" value="1"/>
</dbReference>
<dbReference type="CDD" id="cd09158">
    <property type="entry name" value="PLDc_EcCLS_like_2"/>
    <property type="match status" value="1"/>
</dbReference>
<dbReference type="FunFam" id="3.30.870.10:FF:000002">
    <property type="entry name" value="Cardiolipin synthase A"/>
    <property type="match status" value="1"/>
</dbReference>
<dbReference type="FunFam" id="3.30.870.10:FF:000003">
    <property type="entry name" value="Cardiolipin synthase A"/>
    <property type="match status" value="1"/>
</dbReference>
<dbReference type="Gene3D" id="3.30.870.10">
    <property type="entry name" value="Endonuclease Chain A"/>
    <property type="match status" value="2"/>
</dbReference>
<dbReference type="HAMAP" id="MF_00190">
    <property type="entry name" value="Cardiolipin_synth_ClsA"/>
    <property type="match status" value="1"/>
</dbReference>
<dbReference type="InterPro" id="IPR022924">
    <property type="entry name" value="Cardiolipin_synthase"/>
</dbReference>
<dbReference type="InterPro" id="IPR030840">
    <property type="entry name" value="CL_synthase_A"/>
</dbReference>
<dbReference type="InterPro" id="IPR027379">
    <property type="entry name" value="CLS_N"/>
</dbReference>
<dbReference type="InterPro" id="IPR025202">
    <property type="entry name" value="PLD-like_dom"/>
</dbReference>
<dbReference type="InterPro" id="IPR001736">
    <property type="entry name" value="PLipase_D/transphosphatidylase"/>
</dbReference>
<dbReference type="NCBIfam" id="TIGR04265">
    <property type="entry name" value="bac_cardiolipin"/>
    <property type="match status" value="1"/>
</dbReference>
<dbReference type="PANTHER" id="PTHR21248">
    <property type="entry name" value="CARDIOLIPIN SYNTHASE"/>
    <property type="match status" value="1"/>
</dbReference>
<dbReference type="PANTHER" id="PTHR21248:SF22">
    <property type="entry name" value="PHOSPHOLIPASE D"/>
    <property type="match status" value="1"/>
</dbReference>
<dbReference type="Pfam" id="PF13091">
    <property type="entry name" value="PLDc_2"/>
    <property type="match status" value="2"/>
</dbReference>
<dbReference type="Pfam" id="PF13396">
    <property type="entry name" value="PLDc_N"/>
    <property type="match status" value="1"/>
</dbReference>
<dbReference type="SMART" id="SM00155">
    <property type="entry name" value="PLDc"/>
    <property type="match status" value="2"/>
</dbReference>
<dbReference type="SUPFAM" id="SSF56024">
    <property type="entry name" value="Phospholipase D/nuclease"/>
    <property type="match status" value="2"/>
</dbReference>
<dbReference type="PROSITE" id="PS50035">
    <property type="entry name" value="PLD"/>
    <property type="match status" value="2"/>
</dbReference>
<proteinExistence type="inferred from homology"/>
<sequence length="486" mass="55127">MTTFYTVISWLSVFGYWLLIAGVTLRILMKRRAVPSAMAWLLIIYILPLVGIIAYLSFGELHLGKRRAERAKAMWPSTARWLSELKECQHIFANSNSEVASPLFQLCERRQGINGVKGNQLQLLTTTDDTLKALVRDIELARHNIEMVFYIWQPGGLVDQVAESLMAAARRGVHCRLLLDSAGSKQFFRSPYPAMMRNAGIEVVEALKVNVFRMFLRRMDLRQHRKIVLIDNYVAYTGSMNMVDPRFFKQDAGVGQWIDMMARMEGPVATTLGIVYACDWEIETGKRILPPPPDANIMPFEEETGHTIQVIASGPGFPEEMIHQALLTAVYAAREQLIMTTPYFVPSDDLLHAICTAAQRGVDVSIIVPRENDSMMVRWASRAFFTELLNAGVKIYQFEGGLLHSKSVLVDGQLSLVGTVNLDMRSLWLNFEITLVIDDDGFGADLAQVQDDYIARSALLDGERWNKRPLWHRVTERLFYFFSPLL</sequence>